<proteinExistence type="evidence at protein level"/>
<comment type="function">
    <text evidence="1">Part of the sulfo-TAL (or sulfo-SFT) pathway, a D-sulfoquinovose degradation pathway that produces sulfolactate (SL) (PubMed:32919372). Catalyzes the isomerization of sulfoquinovose (SQ) to 6-deoxy-6-sulfo-D-fructose (SF) (PubMed:32919372).</text>
</comment>
<comment type="catalytic activity">
    <reaction evidence="1">
        <text>6-sulfo-beta-D-quinovose = 6-deoxy-6-sulfo-D-fructose</text>
        <dbReference type="Rhea" id="RHEA:40439"/>
        <dbReference type="ChEBI" id="CHEBI:77133"/>
        <dbReference type="ChEBI" id="CHEBI:142957"/>
        <dbReference type="EC" id="5.3.1.31"/>
    </reaction>
    <physiologicalReaction direction="left-to-right" evidence="1">
        <dbReference type="Rhea" id="RHEA:40440"/>
    </physiologicalReaction>
</comment>
<comment type="induction">
    <text evidence="1">Induced by growth on sulfoquinovose.</text>
</comment>
<comment type="similarity">
    <text evidence="3">Belongs to the SqvD family.</text>
</comment>
<evidence type="ECO:0000269" key="1">
    <source>
    </source>
</evidence>
<evidence type="ECO:0000303" key="2">
    <source>
    </source>
</evidence>
<evidence type="ECO:0000305" key="3"/>
<evidence type="ECO:0000312" key="4">
    <source>
        <dbReference type="EMBL" id="MBA9036993.1"/>
    </source>
</evidence>
<protein>
    <recommendedName>
        <fullName evidence="2">Sulfoquinovose isomerase</fullName>
        <shortName evidence="2">SQ isomerase</shortName>
        <ecNumber evidence="1">5.3.1.31</ecNumber>
    </recommendedName>
</protein>
<organism>
    <name type="scientific">Priestia aryabhattai</name>
    <name type="common">Bacillus aryabhattai</name>
    <dbReference type="NCBI Taxonomy" id="412384"/>
    <lineage>
        <taxon>Bacteria</taxon>
        <taxon>Bacillati</taxon>
        <taxon>Bacillota</taxon>
        <taxon>Bacilli</taxon>
        <taxon>Bacillales</taxon>
        <taxon>Bacillaceae</taxon>
        <taxon>Priestia</taxon>
    </lineage>
</organism>
<keyword id="KW-0119">Carbohydrate metabolism</keyword>
<keyword id="KW-0413">Isomerase</keyword>
<accession>A0A7W3RDA3</accession>
<name>SQVD_PRIAR</name>
<sequence>MQNTTVLYVPIGRKTFDIEVAEIYRQKSMEWLKGNCSTVIAPEQIVTSVEELQGFLDSIKGNKIDTVLYQSVTFADGEFMVKILEYFKQPVIVWSVREPSVGGRLRLNSLTGGNSTSNVLRNHQHPFAFVFGNPDEKALQERLLRQINVMRVLKALNELKIGVVGDYPPGFFFSAANEEELKSALGVTLHKMDLQEAFKECVKLPEQEWIGEVERAEKQVIGLNRNDETVTKFAQFSTYIKKHIQSEELDALAMRCWPDFFNDLGAAPCSTLSQFTEDGMVTSCESDIHGSISMFILRELAGGNAPYLGDLVHIDEEKNSVVFWHCGAGAYSLANPSTGATAGVHPNRKIGFAMDFGLKAGEVTIFRVSHTPDGYRLLVMKGNALDVEQPFTGTSVEVELATNASDTLYELMHAGYEPHFALVYGDVTEHLIELGRMLNLETKVYV</sequence>
<dbReference type="EC" id="5.3.1.31" evidence="1"/>
<dbReference type="EMBL" id="JACJHT010000001">
    <property type="protein sequence ID" value="MBA9036993.1"/>
    <property type="molecule type" value="Genomic_DNA"/>
</dbReference>
<dbReference type="RefSeq" id="WP_013058332.1">
    <property type="nucleotide sequence ID" value="NZ_CP041519.1"/>
</dbReference>
<dbReference type="SMR" id="A0A7W3RDA3"/>
<dbReference type="Proteomes" id="UP000543174">
    <property type="component" value="Unassembled WGS sequence"/>
</dbReference>
<dbReference type="GO" id="GO:0005737">
    <property type="term" value="C:cytoplasm"/>
    <property type="evidence" value="ECO:0007669"/>
    <property type="project" value="InterPro"/>
</dbReference>
<dbReference type="GO" id="GO:0008736">
    <property type="term" value="F:L-fucose isomerase activity"/>
    <property type="evidence" value="ECO:0007669"/>
    <property type="project" value="InterPro"/>
</dbReference>
<dbReference type="GO" id="GO:0006004">
    <property type="term" value="P:fucose metabolic process"/>
    <property type="evidence" value="ECO:0007669"/>
    <property type="project" value="InterPro"/>
</dbReference>
<dbReference type="InterPro" id="IPR004216">
    <property type="entry name" value="Fuc/Ara_isomerase_C"/>
</dbReference>
<dbReference type="InterPro" id="IPR015888">
    <property type="entry name" value="Fuc_isomerase_C"/>
</dbReference>
<dbReference type="InterPro" id="IPR009015">
    <property type="entry name" value="Fucose_isomerase_N/cen_sf"/>
</dbReference>
<dbReference type="PANTHER" id="PTHR36120">
    <property type="entry name" value="FUCOSE ISOMERASE"/>
    <property type="match status" value="1"/>
</dbReference>
<dbReference type="PANTHER" id="PTHR36120:SF1">
    <property type="entry name" value="L-FUCOSE ISOMERASE C-TERMINAL DOMAIN-CONTAINING PROTEIN"/>
    <property type="match status" value="1"/>
</dbReference>
<dbReference type="Pfam" id="PF02952">
    <property type="entry name" value="Fucose_iso_C"/>
    <property type="match status" value="1"/>
</dbReference>
<dbReference type="SUPFAM" id="SSF50443">
    <property type="entry name" value="FucI/AraA C-terminal domain-like"/>
    <property type="match status" value="1"/>
</dbReference>
<dbReference type="SUPFAM" id="SSF53743">
    <property type="entry name" value="FucI/AraA N-terminal and middle domains"/>
    <property type="match status" value="1"/>
</dbReference>
<reference key="1">
    <citation type="submission" date="2020-08" db="EMBL/GenBank/DDBJ databases">
        <title>Functional genomics of gut bacteria from endangered species of beetles.</title>
        <authorList>
            <person name="Carlos-Shanley C."/>
        </authorList>
    </citation>
    <scope>NUCLEOTIDE SEQUENCE [LARGE SCALE GENOMIC DNA]</scope>
    <source>
        <strain>S00060</strain>
    </source>
</reference>
<reference key="2">
    <citation type="journal article" date="2020" name="IScience">
        <title>Environmental and Intestinal Phylum Firmicutes Bacteria Metabolize the Plant Sugar Sulfoquinovose via a 6-Deoxy-6-sulfofructose Transaldolase Pathway.</title>
        <authorList>
            <person name="Frommeyer B."/>
            <person name="Fiedler A.W."/>
            <person name="Oehler S.R."/>
            <person name="Hanson B.T."/>
            <person name="Loy A."/>
            <person name="Franchini P."/>
            <person name="Spiteller D."/>
            <person name="Schleheck D."/>
        </authorList>
    </citation>
    <scope>NUCLEOTIDE SEQUENCE [LARGE SCALE GENOMIC DNA]</scope>
    <scope>FUNCTION</scope>
    <scope>CATALYTIC ACTIVITY</scope>
    <scope>INDUCTION</scope>
    <source>
        <strain>SOS1</strain>
    </source>
</reference>
<gene>
    <name evidence="2" type="primary">sftI</name>
    <name evidence="2" type="ORF">Ga0111075_10031323</name>
    <name evidence="4" type="ORF">HNP21_000082</name>
</gene>
<feature type="chain" id="PRO_0000458969" description="Sulfoquinovose isomerase">
    <location>
        <begin position="1"/>
        <end position="446"/>
    </location>
</feature>